<comment type="function">
    <text evidence="2">Catalyzes the reversible isomerization between hydroxypyruvate and 2-hydroxy-3-oxopropanoate (also termed tartronate semialdehyde). Does not catalyze the isomerization of D-fructose to D-glucose or that of D-xylulose to D-xylose. Also does not catalyze racemization of serine, alanine, glycerate or lactate.</text>
</comment>
<comment type="catalytic activity">
    <reaction evidence="2">
        <text>3-hydroxypyruvate = 2-hydroxy-3-oxopropanoate</text>
        <dbReference type="Rhea" id="RHEA:11952"/>
        <dbReference type="ChEBI" id="CHEBI:17180"/>
        <dbReference type="ChEBI" id="CHEBI:57978"/>
        <dbReference type="EC" id="5.3.1.22"/>
    </reaction>
</comment>
<comment type="activity regulation">
    <text evidence="2">Not stimulated by addition of pyridoxal 5'-phosphate (0.1 mM), FAD, NAD(+), NADP(+) or ATP (1 mM each). EDTA (10 mM) and metal ions (1 mM) such as Ca(2+), Co(2+), Mg(2+), Ni(2+), Zn(2+) do not affect the enzyme activity.</text>
</comment>
<comment type="biophysicochemical properties">
    <kinetics>
        <KM evidence="2">12.5 mM for hydroxypyruvate (at 37 degrees Celsius and pH 7.0)</KM>
        <Vmax evidence="2">14.3 umol/min/mg enzyme (at 37 degrees Celsius and pH 7.0)</Vmax>
    </kinetics>
    <phDependence>
        <text evidence="2">Optimum pH is 6.8-7.2.</text>
    </phDependence>
</comment>
<comment type="subunit">
    <text evidence="2">Homodimer.</text>
</comment>
<comment type="induction">
    <text>By glyoxylate.</text>
</comment>
<comment type="disruption phenotype">
    <text evidence="3">Does not affect growth on glycolate or glyoxylate.</text>
</comment>
<comment type="similarity">
    <text evidence="4">Belongs to the hyi family.</text>
</comment>
<accession>P30147</accession>
<accession>Q2MBS0</accession>
<dbReference type="EC" id="5.3.1.22"/>
<dbReference type="EMBL" id="L03845">
    <property type="protein sequence ID" value="AAA23865.1"/>
    <property type="molecule type" value="Genomic_DNA"/>
</dbReference>
<dbReference type="EMBL" id="AB028043">
    <property type="protein sequence ID" value="BAA89011.1"/>
    <property type="molecule type" value="Genomic_DNA"/>
</dbReference>
<dbReference type="EMBL" id="U82664">
    <property type="protein sequence ID" value="AAB40261.1"/>
    <property type="molecule type" value="Genomic_DNA"/>
</dbReference>
<dbReference type="EMBL" id="U00096">
    <property type="protein sequence ID" value="AAC73610.1"/>
    <property type="molecule type" value="Genomic_DNA"/>
</dbReference>
<dbReference type="EMBL" id="AP009048">
    <property type="protein sequence ID" value="BAE76286.1"/>
    <property type="molecule type" value="Genomic_DNA"/>
</dbReference>
<dbReference type="PIR" id="JT0746">
    <property type="entry name" value="JT0746"/>
</dbReference>
<dbReference type="RefSeq" id="NP_415041.1">
    <property type="nucleotide sequence ID" value="NC_000913.3"/>
</dbReference>
<dbReference type="RefSeq" id="WP_000943544.1">
    <property type="nucleotide sequence ID" value="NZ_SSZK01000024.1"/>
</dbReference>
<dbReference type="SMR" id="P30147"/>
<dbReference type="BioGRID" id="4259863">
    <property type="interactions" value="17"/>
</dbReference>
<dbReference type="BioGRID" id="850546">
    <property type="interactions" value="5"/>
</dbReference>
<dbReference type="DIP" id="DIP-9994N"/>
<dbReference type="FunCoup" id="P30147">
    <property type="interactions" value="215"/>
</dbReference>
<dbReference type="IntAct" id="P30147">
    <property type="interactions" value="12"/>
</dbReference>
<dbReference type="STRING" id="511145.b0508"/>
<dbReference type="jPOST" id="P30147"/>
<dbReference type="PaxDb" id="511145-b0508"/>
<dbReference type="EnsemblBacteria" id="AAC73610">
    <property type="protein sequence ID" value="AAC73610"/>
    <property type="gene ID" value="b0508"/>
</dbReference>
<dbReference type="GeneID" id="946186"/>
<dbReference type="KEGG" id="ecj:JW0496"/>
<dbReference type="KEGG" id="eco:b0508"/>
<dbReference type="KEGG" id="ecoc:C3026_02495"/>
<dbReference type="PATRIC" id="fig|1411691.4.peg.1769"/>
<dbReference type="EchoBASE" id="EB1543"/>
<dbReference type="eggNOG" id="COG3622">
    <property type="taxonomic scope" value="Bacteria"/>
</dbReference>
<dbReference type="HOGENOM" id="CLU_050006_1_2_6"/>
<dbReference type="InParanoid" id="P30147"/>
<dbReference type="OMA" id="VECHWPY"/>
<dbReference type="OrthoDB" id="9786584at2"/>
<dbReference type="PhylomeDB" id="P30147"/>
<dbReference type="BioCyc" id="EcoCyc:G6277-MONOMER"/>
<dbReference type="BioCyc" id="MetaCyc:G6277-MONOMER"/>
<dbReference type="PRO" id="PR:P30147"/>
<dbReference type="Proteomes" id="UP000000625">
    <property type="component" value="Chromosome"/>
</dbReference>
<dbReference type="GO" id="GO:0008903">
    <property type="term" value="F:hydroxypyruvate isomerase activity"/>
    <property type="evidence" value="ECO:0000314"/>
    <property type="project" value="FlyBase"/>
</dbReference>
<dbReference type="GO" id="GO:0042803">
    <property type="term" value="F:protein homodimerization activity"/>
    <property type="evidence" value="ECO:0000314"/>
    <property type="project" value="FlyBase"/>
</dbReference>
<dbReference type="GO" id="GO:0046487">
    <property type="term" value="P:glyoxylate metabolic process"/>
    <property type="evidence" value="ECO:0000314"/>
    <property type="project" value="FlyBase"/>
</dbReference>
<dbReference type="FunFam" id="3.20.20.150:FF:000007">
    <property type="entry name" value="Hydroxypyruvate isomerase"/>
    <property type="match status" value="1"/>
</dbReference>
<dbReference type="Gene3D" id="3.20.20.150">
    <property type="entry name" value="Divalent-metal-dependent TIM barrel enzymes"/>
    <property type="match status" value="1"/>
</dbReference>
<dbReference type="InterPro" id="IPR053398">
    <property type="entry name" value="HPT_OtnI_isomerases"/>
</dbReference>
<dbReference type="InterPro" id="IPR017643">
    <property type="entry name" value="Hydroxypyruvate_isomerase"/>
</dbReference>
<dbReference type="InterPro" id="IPR026040">
    <property type="entry name" value="HyI-like"/>
</dbReference>
<dbReference type="InterPro" id="IPR050417">
    <property type="entry name" value="Sugar_Epim/Isomerase"/>
</dbReference>
<dbReference type="InterPro" id="IPR036237">
    <property type="entry name" value="Xyl_isomerase-like_sf"/>
</dbReference>
<dbReference type="InterPro" id="IPR013022">
    <property type="entry name" value="Xyl_isomerase-like_TIM-brl"/>
</dbReference>
<dbReference type="NCBIfam" id="TIGR03234">
    <property type="entry name" value="OH-pyruv-isom"/>
    <property type="match status" value="1"/>
</dbReference>
<dbReference type="NCBIfam" id="NF043033">
    <property type="entry name" value="OxoTetrIsom"/>
    <property type="match status" value="1"/>
</dbReference>
<dbReference type="NCBIfam" id="NF007444">
    <property type="entry name" value="PRK09997.1"/>
    <property type="match status" value="1"/>
</dbReference>
<dbReference type="PANTHER" id="PTHR43489:SF13">
    <property type="entry name" value="HYDROXYPYRUVATE ISOMERASE"/>
    <property type="match status" value="1"/>
</dbReference>
<dbReference type="PANTHER" id="PTHR43489">
    <property type="entry name" value="ISOMERASE"/>
    <property type="match status" value="1"/>
</dbReference>
<dbReference type="Pfam" id="PF01261">
    <property type="entry name" value="AP_endonuc_2"/>
    <property type="match status" value="1"/>
</dbReference>
<dbReference type="PIRSF" id="PIRSF006241">
    <property type="entry name" value="HyI"/>
    <property type="match status" value="1"/>
</dbReference>
<dbReference type="SUPFAM" id="SSF51658">
    <property type="entry name" value="Xylose isomerase-like"/>
    <property type="match status" value="1"/>
</dbReference>
<sequence length="258" mass="29377">MLRFSANLSMLFGEYDFLARFEKAAQCGFRGVEFMFPYDYDIEELKHVLASNKLEHTLHNLPAGDWAAGERGIACIPGREEEFRDGVAAAIRYARALGNKKINCLVGKTPAGFSSEQIHATLVENLRYAANMLMKEDILLLIEPINHFDIPGFHLTGTRQALKLIDDVGCCNLKIQYDIYHMQRMEGELTNTMTQWADKIGHLQIADNPHRGEPGTGEINYDYLFKVIENSDYNGWVGCEYKPQTTTEAGLRWMDPYR</sequence>
<gene>
    <name type="primary">hyi</name>
    <name type="synonym">gip</name>
    <name type="synonym">ybbG</name>
    <name type="ordered locus">b0508</name>
    <name type="ordered locus">JW0496</name>
</gene>
<keyword id="KW-0413">Isomerase</keyword>
<keyword id="KW-1185">Reference proteome</keyword>
<feature type="chain" id="PRO_0000209106" description="Hydroxypyruvate isomerase">
    <location>
        <begin position="1"/>
        <end position="258"/>
    </location>
</feature>
<feature type="active site" description="Proton donor/acceptor" evidence="1">
    <location>
        <position position="143"/>
    </location>
</feature>
<feature type="active site" description="Proton donor/acceptor" evidence="1">
    <location>
        <position position="240"/>
    </location>
</feature>
<proteinExistence type="evidence at protein level"/>
<evidence type="ECO:0000250" key="1">
    <source>
        <dbReference type="UniProtKB" id="Q9WYP7"/>
    </source>
</evidence>
<evidence type="ECO:0000269" key="2">
    <source>
    </source>
</evidence>
<evidence type="ECO:0000269" key="3">
    <source>
    </source>
</evidence>
<evidence type="ECO:0000305" key="4"/>
<name>HYI_ECOLI</name>
<reference key="1">
    <citation type="journal article" date="1993" name="J. Biol. Chem.">
        <title>Molecular cloning, DNA sequencing, and biochemical analyses of Escherichia coli glyoxylate carboligase. An enzyme of the acetohydroxy acid synthase-pyruvate oxidase family.</title>
        <authorList>
            <person name="Chang Y.-Y."/>
            <person name="Wang A.-Y."/>
            <person name="Cronan J.E. Jr."/>
        </authorList>
    </citation>
    <scope>NUCLEOTIDE SEQUENCE [GENOMIC DNA]</scope>
    <scope>DISRUPTION PHENOTYPE</scope>
    <source>
        <strain>K12</strain>
    </source>
</reference>
<reference key="2">
    <citation type="journal article" date="1999" name="Biochim. Biophys. Acta">
        <title>Biochemical evidence that Escherichia coli hyi (orf b0508, gip) gene encodes hydroxypyruvate isomerase.</title>
        <authorList>
            <person name="Ashiuchi M."/>
            <person name="Misono H."/>
        </authorList>
    </citation>
    <scope>NUCLEOTIDE SEQUENCE [GENOMIC DNA]</scope>
    <scope>FUNCTION</scope>
    <scope>CATALYTIC ACTIVITY</scope>
    <scope>SUBSTRATE SPECIFICITY</scope>
    <scope>ACTIVITY REGULATION</scope>
    <scope>BIOPHYSICOCHEMICAL PROPERTIES</scope>
    <scope>SUBUNIT</scope>
    <source>
        <strain>K12 / JM109 / ATCC 53323</strain>
    </source>
</reference>
<reference key="3">
    <citation type="submission" date="1997-01" db="EMBL/GenBank/DDBJ databases">
        <title>Sequence of minutes 4-25 of Escherichia coli.</title>
        <authorList>
            <person name="Chung E."/>
            <person name="Allen E."/>
            <person name="Araujo R."/>
            <person name="Aparicio A.M."/>
            <person name="Davis K."/>
            <person name="Duncan M."/>
            <person name="Federspiel N."/>
            <person name="Hyman R."/>
            <person name="Kalman S."/>
            <person name="Komp C."/>
            <person name="Kurdi O."/>
            <person name="Lew H."/>
            <person name="Lin D."/>
            <person name="Namath A."/>
            <person name="Oefner P."/>
            <person name="Roberts D."/>
            <person name="Schramm S."/>
            <person name="Davis R.W."/>
        </authorList>
    </citation>
    <scope>NUCLEOTIDE SEQUENCE [LARGE SCALE GENOMIC DNA]</scope>
    <source>
        <strain>K12 / MG1655 / ATCC 47076</strain>
    </source>
</reference>
<reference key="4">
    <citation type="journal article" date="1997" name="Science">
        <title>The complete genome sequence of Escherichia coli K-12.</title>
        <authorList>
            <person name="Blattner F.R."/>
            <person name="Plunkett G. III"/>
            <person name="Bloch C.A."/>
            <person name="Perna N.T."/>
            <person name="Burland V."/>
            <person name="Riley M."/>
            <person name="Collado-Vides J."/>
            <person name="Glasner J.D."/>
            <person name="Rode C.K."/>
            <person name="Mayhew G.F."/>
            <person name="Gregor J."/>
            <person name="Davis N.W."/>
            <person name="Kirkpatrick H.A."/>
            <person name="Goeden M.A."/>
            <person name="Rose D.J."/>
            <person name="Mau B."/>
            <person name="Shao Y."/>
        </authorList>
    </citation>
    <scope>NUCLEOTIDE SEQUENCE [LARGE SCALE GENOMIC DNA]</scope>
    <source>
        <strain>K12 / MG1655 / ATCC 47076</strain>
    </source>
</reference>
<reference key="5">
    <citation type="journal article" date="2006" name="Mol. Syst. Biol.">
        <title>Highly accurate genome sequences of Escherichia coli K-12 strains MG1655 and W3110.</title>
        <authorList>
            <person name="Hayashi K."/>
            <person name="Morooka N."/>
            <person name="Yamamoto Y."/>
            <person name="Fujita K."/>
            <person name="Isono K."/>
            <person name="Choi S."/>
            <person name="Ohtsubo E."/>
            <person name="Baba T."/>
            <person name="Wanner B.L."/>
            <person name="Mori H."/>
            <person name="Horiuchi T."/>
        </authorList>
    </citation>
    <scope>NUCLEOTIDE SEQUENCE [LARGE SCALE GENOMIC DNA]</scope>
    <source>
        <strain>K12 / W3110 / ATCC 27325 / DSM 5911</strain>
    </source>
</reference>
<protein>
    <recommendedName>
        <fullName>Hydroxypyruvate isomerase</fullName>
        <ecNumber>5.3.1.22</ecNumber>
    </recommendedName>
    <alternativeName>
        <fullName>Glyoxylate-induced protein</fullName>
    </alternativeName>
</protein>
<organism>
    <name type="scientific">Escherichia coli (strain K12)</name>
    <dbReference type="NCBI Taxonomy" id="83333"/>
    <lineage>
        <taxon>Bacteria</taxon>
        <taxon>Pseudomonadati</taxon>
        <taxon>Pseudomonadota</taxon>
        <taxon>Gammaproteobacteria</taxon>
        <taxon>Enterobacterales</taxon>
        <taxon>Enterobacteriaceae</taxon>
        <taxon>Escherichia</taxon>
    </lineage>
</organism>